<dbReference type="EMBL" id="AE007869">
    <property type="protein sequence ID" value="AAK87695.1"/>
    <property type="molecule type" value="Genomic_DNA"/>
</dbReference>
<dbReference type="PIR" id="AB2814">
    <property type="entry name" value="AB2814"/>
</dbReference>
<dbReference type="PIR" id="F97592">
    <property type="entry name" value="F97592"/>
</dbReference>
<dbReference type="RefSeq" id="NP_354910.1">
    <property type="nucleotide sequence ID" value="NC_003062.2"/>
</dbReference>
<dbReference type="RefSeq" id="WP_006313978.1">
    <property type="nucleotide sequence ID" value="NC_003062.2"/>
</dbReference>
<dbReference type="SMR" id="Q8UE32"/>
<dbReference type="STRING" id="176299.Atu1932"/>
<dbReference type="EnsemblBacteria" id="AAK87695">
    <property type="protein sequence ID" value="AAK87695"/>
    <property type="gene ID" value="Atu1932"/>
</dbReference>
<dbReference type="GeneID" id="1133970"/>
<dbReference type="KEGG" id="atu:Atu1932"/>
<dbReference type="PATRIC" id="fig|176299.10.peg.1944"/>
<dbReference type="eggNOG" id="COG0096">
    <property type="taxonomic scope" value="Bacteria"/>
</dbReference>
<dbReference type="HOGENOM" id="CLU_098428_0_0_5"/>
<dbReference type="OrthoDB" id="9802617at2"/>
<dbReference type="PhylomeDB" id="Q8UE32"/>
<dbReference type="BioCyc" id="AGRO:ATU1932-MONOMER"/>
<dbReference type="Proteomes" id="UP000000813">
    <property type="component" value="Chromosome circular"/>
</dbReference>
<dbReference type="GO" id="GO:1990904">
    <property type="term" value="C:ribonucleoprotein complex"/>
    <property type="evidence" value="ECO:0007669"/>
    <property type="project" value="UniProtKB-KW"/>
</dbReference>
<dbReference type="GO" id="GO:0005840">
    <property type="term" value="C:ribosome"/>
    <property type="evidence" value="ECO:0007669"/>
    <property type="project" value="UniProtKB-KW"/>
</dbReference>
<dbReference type="GO" id="GO:0019843">
    <property type="term" value="F:rRNA binding"/>
    <property type="evidence" value="ECO:0007669"/>
    <property type="project" value="UniProtKB-UniRule"/>
</dbReference>
<dbReference type="GO" id="GO:0003735">
    <property type="term" value="F:structural constituent of ribosome"/>
    <property type="evidence" value="ECO:0007669"/>
    <property type="project" value="InterPro"/>
</dbReference>
<dbReference type="GO" id="GO:0006412">
    <property type="term" value="P:translation"/>
    <property type="evidence" value="ECO:0007669"/>
    <property type="project" value="UniProtKB-UniRule"/>
</dbReference>
<dbReference type="FunFam" id="3.30.1490.10:FF:000001">
    <property type="entry name" value="30S ribosomal protein S8"/>
    <property type="match status" value="1"/>
</dbReference>
<dbReference type="Gene3D" id="3.30.1370.30">
    <property type="match status" value="1"/>
</dbReference>
<dbReference type="Gene3D" id="3.30.1490.10">
    <property type="match status" value="1"/>
</dbReference>
<dbReference type="HAMAP" id="MF_01302_B">
    <property type="entry name" value="Ribosomal_uS8_B"/>
    <property type="match status" value="1"/>
</dbReference>
<dbReference type="InterPro" id="IPR000630">
    <property type="entry name" value="Ribosomal_uS8"/>
</dbReference>
<dbReference type="InterPro" id="IPR047863">
    <property type="entry name" value="Ribosomal_uS8_CS"/>
</dbReference>
<dbReference type="InterPro" id="IPR035987">
    <property type="entry name" value="Ribosomal_uS8_sf"/>
</dbReference>
<dbReference type="NCBIfam" id="NF001109">
    <property type="entry name" value="PRK00136.1"/>
    <property type="match status" value="1"/>
</dbReference>
<dbReference type="PANTHER" id="PTHR11758">
    <property type="entry name" value="40S RIBOSOMAL PROTEIN S15A"/>
    <property type="match status" value="1"/>
</dbReference>
<dbReference type="Pfam" id="PF00410">
    <property type="entry name" value="Ribosomal_S8"/>
    <property type="match status" value="1"/>
</dbReference>
<dbReference type="SUPFAM" id="SSF56047">
    <property type="entry name" value="Ribosomal protein S8"/>
    <property type="match status" value="1"/>
</dbReference>
<dbReference type="PROSITE" id="PS00053">
    <property type="entry name" value="RIBOSOMAL_S8"/>
    <property type="match status" value="1"/>
</dbReference>
<organism>
    <name type="scientific">Agrobacterium fabrum (strain C58 / ATCC 33970)</name>
    <name type="common">Agrobacterium tumefaciens (strain C58)</name>
    <dbReference type="NCBI Taxonomy" id="176299"/>
    <lineage>
        <taxon>Bacteria</taxon>
        <taxon>Pseudomonadati</taxon>
        <taxon>Pseudomonadota</taxon>
        <taxon>Alphaproteobacteria</taxon>
        <taxon>Hyphomicrobiales</taxon>
        <taxon>Rhizobiaceae</taxon>
        <taxon>Rhizobium/Agrobacterium group</taxon>
        <taxon>Agrobacterium</taxon>
        <taxon>Agrobacterium tumefaciens complex</taxon>
    </lineage>
</organism>
<reference key="1">
    <citation type="journal article" date="2001" name="Science">
        <title>The genome of the natural genetic engineer Agrobacterium tumefaciens C58.</title>
        <authorList>
            <person name="Wood D.W."/>
            <person name="Setubal J.C."/>
            <person name="Kaul R."/>
            <person name="Monks D.E."/>
            <person name="Kitajima J.P."/>
            <person name="Okura V.K."/>
            <person name="Zhou Y."/>
            <person name="Chen L."/>
            <person name="Wood G.E."/>
            <person name="Almeida N.F. Jr."/>
            <person name="Woo L."/>
            <person name="Chen Y."/>
            <person name="Paulsen I.T."/>
            <person name="Eisen J.A."/>
            <person name="Karp P.D."/>
            <person name="Bovee D. Sr."/>
            <person name="Chapman P."/>
            <person name="Clendenning J."/>
            <person name="Deatherage G."/>
            <person name="Gillet W."/>
            <person name="Grant C."/>
            <person name="Kutyavin T."/>
            <person name="Levy R."/>
            <person name="Li M.-J."/>
            <person name="McClelland E."/>
            <person name="Palmieri A."/>
            <person name="Raymond C."/>
            <person name="Rouse G."/>
            <person name="Saenphimmachak C."/>
            <person name="Wu Z."/>
            <person name="Romero P."/>
            <person name="Gordon D."/>
            <person name="Zhang S."/>
            <person name="Yoo H."/>
            <person name="Tao Y."/>
            <person name="Biddle P."/>
            <person name="Jung M."/>
            <person name="Krespan W."/>
            <person name="Perry M."/>
            <person name="Gordon-Kamm B."/>
            <person name="Liao L."/>
            <person name="Kim S."/>
            <person name="Hendrick C."/>
            <person name="Zhao Z.-Y."/>
            <person name="Dolan M."/>
            <person name="Chumley F."/>
            <person name="Tingey S.V."/>
            <person name="Tomb J.-F."/>
            <person name="Gordon M.P."/>
            <person name="Olson M.V."/>
            <person name="Nester E.W."/>
        </authorList>
    </citation>
    <scope>NUCLEOTIDE SEQUENCE [LARGE SCALE GENOMIC DNA]</scope>
    <source>
        <strain>C58 / ATCC 33970</strain>
    </source>
</reference>
<reference key="2">
    <citation type="journal article" date="2001" name="Science">
        <title>Genome sequence of the plant pathogen and biotechnology agent Agrobacterium tumefaciens C58.</title>
        <authorList>
            <person name="Goodner B."/>
            <person name="Hinkle G."/>
            <person name="Gattung S."/>
            <person name="Miller N."/>
            <person name="Blanchard M."/>
            <person name="Qurollo B."/>
            <person name="Goldman B.S."/>
            <person name="Cao Y."/>
            <person name="Askenazi M."/>
            <person name="Halling C."/>
            <person name="Mullin L."/>
            <person name="Houmiel K."/>
            <person name="Gordon J."/>
            <person name="Vaudin M."/>
            <person name="Iartchouk O."/>
            <person name="Epp A."/>
            <person name="Liu F."/>
            <person name="Wollam C."/>
            <person name="Allinger M."/>
            <person name="Doughty D."/>
            <person name="Scott C."/>
            <person name="Lappas C."/>
            <person name="Markelz B."/>
            <person name="Flanagan C."/>
            <person name="Crowell C."/>
            <person name="Gurson J."/>
            <person name="Lomo C."/>
            <person name="Sear C."/>
            <person name="Strub G."/>
            <person name="Cielo C."/>
            <person name="Slater S."/>
        </authorList>
    </citation>
    <scope>NUCLEOTIDE SEQUENCE [LARGE SCALE GENOMIC DNA]</scope>
    <source>
        <strain>C58 / ATCC 33970</strain>
    </source>
</reference>
<accession>Q8UE32</accession>
<proteinExistence type="inferred from homology"/>
<gene>
    <name evidence="1" type="primary">rpsH</name>
    <name type="ordered locus">Atu1932</name>
    <name type="ORF">AGR_C_3534</name>
</gene>
<keyword id="KW-1185">Reference proteome</keyword>
<keyword id="KW-0687">Ribonucleoprotein</keyword>
<keyword id="KW-0689">Ribosomal protein</keyword>
<keyword id="KW-0694">RNA-binding</keyword>
<keyword id="KW-0699">rRNA-binding</keyword>
<feature type="chain" id="PRO_0000126351" description="Small ribosomal subunit protein uS8">
    <location>
        <begin position="1"/>
        <end position="132"/>
    </location>
</feature>
<sequence>MTMTDPLGDMLTRIRNGAARRKSSVSTPASSLRARVLDVLQSEGYIRGYSKVDFENGKAEFTIELKYYEGASVIREIGRVSKPGRRVYVSVKSIPQVANGLGITILSTPKGVMADHQAREQNVGGEVLCSVF</sequence>
<protein>
    <recommendedName>
        <fullName evidence="1">Small ribosomal subunit protein uS8</fullName>
    </recommendedName>
    <alternativeName>
        <fullName evidence="2">30S ribosomal protein S8</fullName>
    </alternativeName>
</protein>
<evidence type="ECO:0000255" key="1">
    <source>
        <dbReference type="HAMAP-Rule" id="MF_01302"/>
    </source>
</evidence>
<evidence type="ECO:0000305" key="2"/>
<comment type="function">
    <text evidence="1">One of the primary rRNA binding proteins, it binds directly to 16S rRNA central domain where it helps coordinate assembly of the platform of the 30S subunit.</text>
</comment>
<comment type="subunit">
    <text evidence="1">Part of the 30S ribosomal subunit. Contacts proteins S5 and S12.</text>
</comment>
<comment type="similarity">
    <text evidence="1">Belongs to the universal ribosomal protein uS8 family.</text>
</comment>
<name>RS8_AGRFC</name>